<organism>
    <name type="scientific">Schizosaccharomyces pombe (strain 972 / ATCC 24843)</name>
    <name type="common">Fission yeast</name>
    <dbReference type="NCBI Taxonomy" id="284812"/>
    <lineage>
        <taxon>Eukaryota</taxon>
        <taxon>Fungi</taxon>
        <taxon>Dikarya</taxon>
        <taxon>Ascomycota</taxon>
        <taxon>Taphrinomycotina</taxon>
        <taxon>Schizosaccharomycetes</taxon>
        <taxon>Schizosaccharomycetales</taxon>
        <taxon>Schizosaccharomycetaceae</taxon>
        <taxon>Schizosaccharomyces</taxon>
    </lineage>
</organism>
<proteinExistence type="evidence at protein level"/>
<accession>Q9UUG9</accession>
<gene>
    <name type="primary">tsc2</name>
    <name type="ORF">SPAC630.13c</name>
</gene>
<protein>
    <recommendedName>
        <fullName>Tuberous sclerosis 2 protein homolog</fullName>
    </recommendedName>
</protein>
<evidence type="ECO:0000255" key="1">
    <source>
        <dbReference type="PROSITE-ProRule" id="PRU00165"/>
    </source>
</evidence>
<evidence type="ECO:0000269" key="2">
    <source>
    </source>
</evidence>
<evidence type="ECO:0000269" key="3">
    <source>
    </source>
</evidence>
<evidence type="ECO:0000269" key="4">
    <source>
    </source>
</evidence>
<evidence type="ECO:0000269" key="5">
    <source>
    </source>
</evidence>
<evidence type="ECO:0000269" key="6">
    <source>
    </source>
</evidence>
<keyword id="KW-0963">Cytoplasm</keyword>
<keyword id="KW-0343">GTPase activation</keyword>
<keyword id="KW-0539">Nucleus</keyword>
<keyword id="KW-0597">Phosphoprotein</keyword>
<keyword id="KW-1185">Reference proteome</keyword>
<comment type="function">
    <text evidence="2 3 4">Together with tsc1, required for uptake of various amino acids from the environment and for proper conjugation. Involved in induction of gene expression of permeases and genes required for meiosis upon nitrogen starvation. May act as a GTPase-activating protein (GAP) for the small GTPase rhb1.</text>
</comment>
<comment type="subunit">
    <text evidence="2">Interacts with tsc1.</text>
</comment>
<comment type="subcellular location">
    <subcellularLocation>
        <location evidence="5">Cytoplasm</location>
    </subcellularLocation>
    <subcellularLocation>
        <location evidence="5">Nucleus</location>
    </subcellularLocation>
</comment>
<sequence length="1339" mass="154813">MNNKSLLDLSSEPAIKDTDILSYFDANLPFKKRHQIVRSIYHGLKYYIYSSTSIIQVWQNIQDFISTKNDNAAFRELVYNLMMRYVSTQKHLSIIERHTFFQTIEKDPFQDIAELQLRLKSLSVLTDEGHKISGIENRVGPLLSAWFNQYLQWQSQATELQGKDADSKLVHLLFFKSLFKFSTNLVKFQWFLVPEPQMLQLVNSVVQICNHARLEDVVTEVLMFFDSMIRYSVIPKASLYDTVLILCSTYISTYSYSKLAQSVIFNLISSPVSNLAFENVFNILQYNRSNVNAVRGAVRLMRFLMLQEVKNDAIASITLSSSIEFTEFPLGFNENVDFEILGTVYLFLRTPSILNRLNFLDWHRILNILMYCSQYLPLKASTSKEAFSKTAAFANIYDRVLDFLDFEALIPLLQQFQVKLVFFLKDVLPVLKPKIRKKLLRLFETYNLIFPCNQYWVFNLEFLLGIYQCKTFDLEDRALLFKLVEDACSVADENSAPILCSKFLFPVIESFSKESDDCVVSPVYNMLFFLSVNFQNPGLKDCIDHIFQQLISDTSSVTVRRLATSTLIRLFYYYYDLRDAVPIQETLAKMLEILETPSFPFVSRMLCLQFFLRFRANGTSIYICENIDLNEPFKVLNVDSELIPAVYPISDSFVNSATVEKHIWERKENDLIKISNHSTEYGKDFVTFPTSSLLRFYRKSMATESNWTILMFMITHLADQISNRSMFIGALEEIYNLLDFMCDIVFERVSISAEIPSNIRKANIMIPILQNVQMLFVYHDQFSRAQEDELVSVFFAGLQKWNEACHVSIHSLMLCCYELPVSIRKQLPAILVTLSRLITKPDLSVHILEFLCSLARLPDLIANFTDADYRQIFAIALKYIQHRDFTKESKDSNDTESILKNSYSSYVLALAYSVLQIWFLSLRLTERKKFVPWILRGLKLASEGKPLEDLCLVQYDMMQQFCYSNSDINNQTSTFVDSDVESETWIRGNSLFTINVSVNSGFLEAVIRRPTGTTQYTFRNEASLQKFLWEENLTSSKALTRGLLCTPSSFVSHFLDPHGISLYNQPLLLPSNDDSVRRAISVFDRIPVIESLKAGLVYVGYQQRREADILANTNPSEDFLTFLNGLGTLFELKTDQKVFAGGLDRENDIDGAFAYCWKDKVTQMVFHCTTMMPTNIEHDPGCTLKKRHIGNDFVTIIFNESGLEYDFDTIPSQFNFVNIVITPESESIRRTGRQIKFYKVKALTKYDIDFSLFRRYKIVSSDALPAIVRDVTLNAAVFSHIYHRSAGDYVHIWAERLRQLKRLREKFQASVLPEDYNLDEQTKTKLQNGTNFSDFTSYL</sequence>
<reference key="1">
    <citation type="journal article" date="2002" name="Nature">
        <title>The genome sequence of Schizosaccharomyces pombe.</title>
        <authorList>
            <person name="Wood V."/>
            <person name="Gwilliam R."/>
            <person name="Rajandream M.A."/>
            <person name="Lyne M.H."/>
            <person name="Lyne R."/>
            <person name="Stewart A."/>
            <person name="Sgouros J.G."/>
            <person name="Peat N."/>
            <person name="Hayles J."/>
            <person name="Baker S.G."/>
            <person name="Basham D."/>
            <person name="Bowman S."/>
            <person name="Brooks K."/>
            <person name="Brown D."/>
            <person name="Brown S."/>
            <person name="Chillingworth T."/>
            <person name="Churcher C.M."/>
            <person name="Collins M."/>
            <person name="Connor R."/>
            <person name="Cronin A."/>
            <person name="Davis P."/>
            <person name="Feltwell T."/>
            <person name="Fraser A."/>
            <person name="Gentles S."/>
            <person name="Goble A."/>
            <person name="Hamlin N."/>
            <person name="Harris D.E."/>
            <person name="Hidalgo J."/>
            <person name="Hodgson G."/>
            <person name="Holroyd S."/>
            <person name="Hornsby T."/>
            <person name="Howarth S."/>
            <person name="Huckle E.J."/>
            <person name="Hunt S."/>
            <person name="Jagels K."/>
            <person name="James K.D."/>
            <person name="Jones L."/>
            <person name="Jones M."/>
            <person name="Leather S."/>
            <person name="McDonald S."/>
            <person name="McLean J."/>
            <person name="Mooney P."/>
            <person name="Moule S."/>
            <person name="Mungall K.L."/>
            <person name="Murphy L.D."/>
            <person name="Niblett D."/>
            <person name="Odell C."/>
            <person name="Oliver K."/>
            <person name="O'Neil S."/>
            <person name="Pearson D."/>
            <person name="Quail M.A."/>
            <person name="Rabbinowitsch E."/>
            <person name="Rutherford K.M."/>
            <person name="Rutter S."/>
            <person name="Saunders D."/>
            <person name="Seeger K."/>
            <person name="Sharp S."/>
            <person name="Skelton J."/>
            <person name="Simmonds M.N."/>
            <person name="Squares R."/>
            <person name="Squares S."/>
            <person name="Stevens K."/>
            <person name="Taylor K."/>
            <person name="Taylor R.G."/>
            <person name="Tivey A."/>
            <person name="Walsh S.V."/>
            <person name="Warren T."/>
            <person name="Whitehead S."/>
            <person name="Woodward J.R."/>
            <person name="Volckaert G."/>
            <person name="Aert R."/>
            <person name="Robben J."/>
            <person name="Grymonprez B."/>
            <person name="Weltjens I."/>
            <person name="Vanstreels E."/>
            <person name="Rieger M."/>
            <person name="Schaefer M."/>
            <person name="Mueller-Auer S."/>
            <person name="Gabel C."/>
            <person name="Fuchs M."/>
            <person name="Duesterhoeft A."/>
            <person name="Fritzc C."/>
            <person name="Holzer E."/>
            <person name="Moestl D."/>
            <person name="Hilbert H."/>
            <person name="Borzym K."/>
            <person name="Langer I."/>
            <person name="Beck A."/>
            <person name="Lehrach H."/>
            <person name="Reinhardt R."/>
            <person name="Pohl T.M."/>
            <person name="Eger P."/>
            <person name="Zimmermann W."/>
            <person name="Wedler H."/>
            <person name="Wambutt R."/>
            <person name="Purnelle B."/>
            <person name="Goffeau A."/>
            <person name="Cadieu E."/>
            <person name="Dreano S."/>
            <person name="Gloux S."/>
            <person name="Lelaure V."/>
            <person name="Mottier S."/>
            <person name="Galibert F."/>
            <person name="Aves S.J."/>
            <person name="Xiang Z."/>
            <person name="Hunt C."/>
            <person name="Moore K."/>
            <person name="Hurst S.M."/>
            <person name="Lucas M."/>
            <person name="Rochet M."/>
            <person name="Gaillardin C."/>
            <person name="Tallada V.A."/>
            <person name="Garzon A."/>
            <person name="Thode G."/>
            <person name="Daga R.R."/>
            <person name="Cruzado L."/>
            <person name="Jimenez J."/>
            <person name="Sanchez M."/>
            <person name="del Rey F."/>
            <person name="Benito J."/>
            <person name="Dominguez A."/>
            <person name="Revuelta J.L."/>
            <person name="Moreno S."/>
            <person name="Armstrong J."/>
            <person name="Forsburg S.L."/>
            <person name="Cerutti L."/>
            <person name="Lowe T."/>
            <person name="McCombie W.R."/>
            <person name="Paulsen I."/>
            <person name="Potashkin J."/>
            <person name="Shpakovski G.V."/>
            <person name="Ussery D."/>
            <person name="Barrell B.G."/>
            <person name="Nurse P."/>
        </authorList>
    </citation>
    <scope>NUCLEOTIDE SEQUENCE [LARGE SCALE GENOMIC DNA]</scope>
    <source>
        <strain>972 / ATCC 24843</strain>
    </source>
</reference>
<reference key="2">
    <citation type="journal article" date="2002" name="Genetics">
        <title>Role of the Tsc1-Tsc2 complex in signaling and transport across the cell membrane in the fission yeast Schizosaccharomyces pombe.</title>
        <authorList>
            <person name="Matsumoto S."/>
            <person name="Bandyopadhyay A."/>
            <person name="Kwiatkowski D.J."/>
            <person name="Maitra U."/>
            <person name="Matsumoto T."/>
        </authorList>
    </citation>
    <scope>FUNCTION</scope>
    <scope>INTERACTION WITH TSC1</scope>
</reference>
<reference key="3">
    <citation type="journal article" date="2004" name="J. Biol. Chem.">
        <title>Tsc1+ and tsc2+ regulate arginine uptake and metabolism in Schizosaccharomyces pombe.</title>
        <authorList>
            <person name="van Slegtenhorst M."/>
            <person name="Carr E."/>
            <person name="Stoyanova R."/>
            <person name="Kruger W.D."/>
            <person name="Henske E.P."/>
        </authorList>
    </citation>
    <scope>FUNCTION</scope>
    <scope>MUTAGENESIS OF ASN-1191</scope>
</reference>
<reference key="4">
    <citation type="journal article" date="2006" name="Genetics">
        <title>A defect in protein farnesylation suppresses a loss of Schizosaccharomyces pombe tsc2+, a homolog of the human gene predisposing to tuberous sclerosis complex.</title>
        <authorList>
            <person name="Nakase Y."/>
            <person name="Fukuda K."/>
            <person name="Chikashige Y."/>
            <person name="Tsutsumi C."/>
            <person name="Morita D."/>
            <person name="Kawamoto S."/>
            <person name="Ohnuki M."/>
            <person name="Hiraoka Y."/>
            <person name="Matsumoto T."/>
        </authorList>
    </citation>
    <scope>FUNCTION</scope>
</reference>
<reference key="5">
    <citation type="journal article" date="2006" name="Nat. Biotechnol.">
        <title>ORFeome cloning and global analysis of protein localization in the fission yeast Schizosaccharomyces pombe.</title>
        <authorList>
            <person name="Matsuyama A."/>
            <person name="Arai R."/>
            <person name="Yashiroda Y."/>
            <person name="Shirai A."/>
            <person name="Kamata A."/>
            <person name="Sekido S."/>
            <person name="Kobayashi Y."/>
            <person name="Hashimoto A."/>
            <person name="Hamamoto M."/>
            <person name="Hiraoka Y."/>
            <person name="Horinouchi S."/>
            <person name="Yoshida M."/>
        </authorList>
    </citation>
    <scope>SUBCELLULAR LOCATION [LARGE SCALE ANALYSIS]</scope>
</reference>
<reference key="6">
    <citation type="journal article" date="2008" name="J. Proteome Res.">
        <title>Phosphoproteome analysis of fission yeast.</title>
        <authorList>
            <person name="Wilson-Grady J.T."/>
            <person name="Villen J."/>
            <person name="Gygi S.P."/>
        </authorList>
    </citation>
    <scope>PHOSPHORYLATION [LARGE SCALE ANALYSIS] AT SER-1036</scope>
    <scope>IDENTIFICATION BY MASS SPECTROMETRY</scope>
</reference>
<name>TSC2_SCHPO</name>
<feature type="chain" id="PRO_0000065657" description="Tuberous sclerosis 2 protein homolog">
    <location>
        <begin position="1"/>
        <end position="1339"/>
    </location>
</feature>
<feature type="domain" description="Rap-GAP" evidence="1">
    <location>
        <begin position="1109"/>
        <end position="1303"/>
    </location>
</feature>
<feature type="modified residue" description="Phosphoserine" evidence="6">
    <location>
        <position position="1036"/>
    </location>
</feature>
<feature type="mutagenesis site" description="Decreased arginine uptake." evidence="3">
    <original>N</original>
    <variation>K</variation>
    <location>
        <position position="1191"/>
    </location>
</feature>
<dbReference type="EMBL" id="CU329670">
    <property type="protein sequence ID" value="CAB52735.1"/>
    <property type="molecule type" value="Genomic_DNA"/>
</dbReference>
<dbReference type="PIR" id="T38991">
    <property type="entry name" value="T38991"/>
</dbReference>
<dbReference type="RefSeq" id="NP_592909.1">
    <property type="nucleotide sequence ID" value="NM_001018309.2"/>
</dbReference>
<dbReference type="SMR" id="Q9UUG9"/>
<dbReference type="BioGRID" id="279762">
    <property type="interactions" value="113"/>
</dbReference>
<dbReference type="FunCoup" id="Q9UUG9">
    <property type="interactions" value="199"/>
</dbReference>
<dbReference type="STRING" id="284812.Q9UUG9"/>
<dbReference type="iPTMnet" id="Q9UUG9"/>
<dbReference type="PaxDb" id="4896-SPAC630.13c.1"/>
<dbReference type="EnsemblFungi" id="SPAC630.13c.1">
    <property type="protein sequence ID" value="SPAC630.13c.1:pep"/>
    <property type="gene ID" value="SPAC630.13c"/>
</dbReference>
<dbReference type="GeneID" id="2543339"/>
<dbReference type="KEGG" id="spo:2543339"/>
<dbReference type="PomBase" id="SPAC630.13c">
    <property type="gene designation" value="tsc2"/>
</dbReference>
<dbReference type="VEuPathDB" id="FungiDB:SPAC630.13c"/>
<dbReference type="eggNOG" id="KOG3687">
    <property type="taxonomic scope" value="Eukaryota"/>
</dbReference>
<dbReference type="HOGENOM" id="CLU_003828_0_0_1"/>
<dbReference type="InParanoid" id="Q9UUG9"/>
<dbReference type="OMA" id="LVQYDMM"/>
<dbReference type="PhylomeDB" id="Q9UUG9"/>
<dbReference type="Reactome" id="R-SPO-165181">
    <property type="pathway name" value="Inhibition of TSC complex formation by PKB"/>
</dbReference>
<dbReference type="Reactome" id="R-SPO-198323">
    <property type="pathway name" value="AKT phosphorylates targets in the cytosol"/>
</dbReference>
<dbReference type="Reactome" id="R-SPO-380972">
    <property type="pathway name" value="Energy dependent regulation of mTOR by LKB1-AMPK"/>
</dbReference>
<dbReference type="Reactome" id="R-SPO-5628897">
    <property type="pathway name" value="TP53 Regulates Metabolic Genes"/>
</dbReference>
<dbReference type="PRO" id="PR:Q9UUG9"/>
<dbReference type="Proteomes" id="UP000002485">
    <property type="component" value="Chromosome I"/>
</dbReference>
<dbReference type="GO" id="GO:0005737">
    <property type="term" value="C:cytoplasm"/>
    <property type="evidence" value="ECO:0007005"/>
    <property type="project" value="PomBase"/>
</dbReference>
<dbReference type="GO" id="GO:0005829">
    <property type="term" value="C:cytosol"/>
    <property type="evidence" value="ECO:0007005"/>
    <property type="project" value="PomBase"/>
</dbReference>
<dbReference type="GO" id="GO:0005634">
    <property type="term" value="C:nucleus"/>
    <property type="evidence" value="ECO:0007005"/>
    <property type="project" value="PomBase"/>
</dbReference>
<dbReference type="GO" id="GO:0033596">
    <property type="term" value="C:TSC1-TSC2 complex"/>
    <property type="evidence" value="ECO:0000353"/>
    <property type="project" value="PomBase"/>
</dbReference>
<dbReference type="GO" id="GO:0005096">
    <property type="term" value="F:GTPase activator activity"/>
    <property type="evidence" value="ECO:0000315"/>
    <property type="project" value="PomBase"/>
</dbReference>
<dbReference type="GO" id="GO:2000134">
    <property type="term" value="P:negative regulation of G1/S transition of mitotic cell cycle"/>
    <property type="evidence" value="ECO:0000315"/>
    <property type="project" value="PomBase"/>
</dbReference>
<dbReference type="GO" id="GO:0032007">
    <property type="term" value="P:negative regulation of TOR signaling"/>
    <property type="evidence" value="ECO:0000318"/>
    <property type="project" value="GO_Central"/>
</dbReference>
<dbReference type="GO" id="GO:1904262">
    <property type="term" value="P:negative regulation of TORC1 signaling"/>
    <property type="evidence" value="ECO:0000315"/>
    <property type="project" value="PomBase"/>
</dbReference>
<dbReference type="GO" id="GO:0010508">
    <property type="term" value="P:positive regulation of autophagy"/>
    <property type="evidence" value="ECO:0000315"/>
    <property type="project" value="PomBase"/>
</dbReference>
<dbReference type="GO" id="GO:1905589">
    <property type="term" value="P:positive regulation of L-arginine import across plasma membrane"/>
    <property type="evidence" value="ECO:0000315"/>
    <property type="project" value="PomBase"/>
</dbReference>
<dbReference type="GO" id="GO:1905534">
    <property type="term" value="P:positive regulation of L-leucine import across plasma membrane"/>
    <property type="evidence" value="ECO:0000315"/>
    <property type="project" value="PomBase"/>
</dbReference>
<dbReference type="GO" id="GO:0051056">
    <property type="term" value="P:regulation of small GTPase mediated signal transduction"/>
    <property type="evidence" value="ECO:0007669"/>
    <property type="project" value="InterPro"/>
</dbReference>
<dbReference type="FunFam" id="3.40.50.11210:FF:000007">
    <property type="entry name" value="Tuberous sclerosis 2"/>
    <property type="match status" value="1"/>
</dbReference>
<dbReference type="Gene3D" id="3.40.50.11210">
    <property type="entry name" value="Rap/Ran-GAP"/>
    <property type="match status" value="1"/>
</dbReference>
<dbReference type="InterPro" id="IPR035974">
    <property type="entry name" value="Rap/Ran-GAP_sf"/>
</dbReference>
<dbReference type="InterPro" id="IPR000331">
    <property type="entry name" value="Rap/Ran_GAP_dom"/>
</dbReference>
<dbReference type="InterPro" id="IPR018515">
    <property type="entry name" value="Tuberin-type_domain"/>
</dbReference>
<dbReference type="InterPro" id="IPR027107">
    <property type="entry name" value="Tuberin/Ral-act_asu"/>
</dbReference>
<dbReference type="InterPro" id="IPR024584">
    <property type="entry name" value="Tuberin_N"/>
</dbReference>
<dbReference type="PANTHER" id="PTHR10063">
    <property type="entry name" value="TUBERIN"/>
    <property type="match status" value="1"/>
</dbReference>
<dbReference type="PANTHER" id="PTHR10063:SF0">
    <property type="entry name" value="TUBERIN"/>
    <property type="match status" value="1"/>
</dbReference>
<dbReference type="Pfam" id="PF11864">
    <property type="entry name" value="DUF3384"/>
    <property type="match status" value="1"/>
</dbReference>
<dbReference type="Pfam" id="PF02145">
    <property type="entry name" value="Rap_GAP"/>
    <property type="match status" value="1"/>
</dbReference>
<dbReference type="Pfam" id="PF03542">
    <property type="entry name" value="Tuberin"/>
    <property type="match status" value="1"/>
</dbReference>
<dbReference type="SUPFAM" id="SSF111347">
    <property type="entry name" value="Rap/Ran-GAP"/>
    <property type="match status" value="1"/>
</dbReference>
<dbReference type="PROSITE" id="PS50085">
    <property type="entry name" value="RAPGAP"/>
    <property type="match status" value="1"/>
</dbReference>